<name>NCBP2_CAEEL</name>
<comment type="function">
    <text evidence="1">Component of the cap-binding complex (CBC), which binds co-transcriptionally to the 5' cap of pre-mRNAs and is involved in various processes such as pre-mRNA splicing and RNA-mediated gene silencing (RNAi). The CBC complex is involved in miRNA-mediated RNA interference and is required for primary microRNAs (miRNAs) processing. In the CBC complex, ncbp-2 recognizes and binds capped RNAs (m7GpppG-capped RNA) but requires ncbp-1 to stabilize the movement of its N-terminal loop and lock the CBC into a high affinity cap-binding state with the cap structure (By similarity).</text>
</comment>
<comment type="subunit">
    <text evidence="1">Component of the nuclear cap-binding complex (CBC), a heterodimer composed of ncbp-1 and ncbp-2 that interacts with m7GpppG-capped RNA.</text>
</comment>
<comment type="subcellular location">
    <subcellularLocation>
        <location evidence="1">Nucleus</location>
    </subcellularLocation>
</comment>
<comment type="alternative products">
    <event type="alternative splicing"/>
    <isoform>
        <id>Q93594-1</id>
        <name>a</name>
        <sequence type="displayed"/>
    </isoform>
    <isoform>
        <id>Q93594-2</id>
        <name>b</name>
        <sequence type="described" ref="VSP_044210"/>
    </isoform>
    <isoform>
        <id>Q93594-3</id>
        <name>c</name>
        <sequence type="described" ref="VSP_044211"/>
    </isoform>
</comment>
<comment type="disruption phenotype">
    <text evidence="4">Lethality in 98.7% of embryos.</text>
</comment>
<comment type="similarity">
    <text evidence="5">Belongs to the RRM NCBP2 family.</text>
</comment>
<reference key="1">
    <citation type="journal article" date="1998" name="Science">
        <title>Genome sequence of the nematode C. elegans: a platform for investigating biology.</title>
        <authorList>
            <consortium name="The C. elegans sequencing consortium"/>
        </authorList>
    </citation>
    <scope>NUCLEOTIDE SEQUENCE [LARGE SCALE GENOMIC DNA]</scope>
    <source>
        <strain>Bristol N2</strain>
    </source>
</reference>
<reference key="2">
    <citation type="journal article" date="2005" name="Mol. Biol. Cell">
        <title>Caenorhabditis elegans decapping proteins: localization and functional analysis of Dcp1, Dcp2, and DcpS during embryogenesis.</title>
        <authorList>
            <person name="Lall S."/>
            <person name="Piano F."/>
            <person name="Davis R.E."/>
        </authorList>
    </citation>
    <scope>DISRUPTION PHENOTYPE</scope>
</reference>
<organism>
    <name type="scientific">Caenorhabditis elegans</name>
    <dbReference type="NCBI Taxonomy" id="6239"/>
    <lineage>
        <taxon>Eukaryota</taxon>
        <taxon>Metazoa</taxon>
        <taxon>Ecdysozoa</taxon>
        <taxon>Nematoda</taxon>
        <taxon>Chromadorea</taxon>
        <taxon>Rhabditida</taxon>
        <taxon>Rhabditina</taxon>
        <taxon>Rhabditomorpha</taxon>
        <taxon>Rhabditoidea</taxon>
        <taxon>Rhabditidae</taxon>
        <taxon>Peloderinae</taxon>
        <taxon>Caenorhabditis</taxon>
    </lineage>
</organism>
<sequence length="158" mass="18438">MVFDPRTLDNPKEISAYRDQRYQGTVRDQETALRTSCTLYVGNLSYYTKEDQVYELFGRAGDVRRVIMGLDRFKKTPCGFCFVEYYTREDAELALQNISNTRMDDRVIRADWDAGFIEGRQYGRGKHGGQVRDEYRKDYDPERGGYNRAIAQKGGDRQ</sequence>
<accession>Q93594</accession>
<accession>G3MU41</accession>
<accession>G3MU42</accession>
<accession>G3MU43</accession>
<feature type="chain" id="PRO_0000385257" description="Nuclear cap-binding protein subunit 2">
    <location>
        <begin position="1"/>
        <end position="158"/>
    </location>
</feature>
<feature type="domain" description="RRM" evidence="2">
    <location>
        <begin position="37"/>
        <end position="115"/>
    </location>
</feature>
<feature type="region of interest" description="Disordered" evidence="3">
    <location>
        <begin position="123"/>
        <end position="158"/>
    </location>
</feature>
<feature type="compositionally biased region" description="Basic and acidic residues" evidence="3">
    <location>
        <begin position="130"/>
        <end position="145"/>
    </location>
</feature>
<feature type="binding site" evidence="1">
    <location>
        <position position="17"/>
    </location>
    <ligand>
        <name>mRNA</name>
        <dbReference type="ChEBI" id="CHEBI:33699"/>
    </ligand>
    <ligandPart>
        <name>mRNA cap</name>
    </ligandPart>
</feature>
<feature type="binding site" evidence="1">
    <location>
        <position position="40"/>
    </location>
    <ligand>
        <name>mRNA</name>
        <dbReference type="ChEBI" id="CHEBI:33699"/>
    </ligand>
    <ligandPart>
        <name>mRNA cap</name>
    </ligandPart>
</feature>
<feature type="binding site" evidence="1">
    <location>
        <begin position="109"/>
        <end position="113"/>
    </location>
    <ligand>
        <name>mRNA</name>
        <dbReference type="ChEBI" id="CHEBI:33699"/>
    </ligand>
    <ligandPart>
        <name>mRNA cap</name>
    </ligandPart>
</feature>
<feature type="binding site" evidence="1">
    <location>
        <begin position="120"/>
        <end position="124"/>
    </location>
    <ligand>
        <name>mRNA</name>
        <dbReference type="ChEBI" id="CHEBI:33699"/>
    </ligand>
    <ligandPart>
        <name>mRNA cap</name>
    </ligandPart>
</feature>
<feature type="binding site" evidence="1">
    <location>
        <begin position="130"/>
        <end position="131"/>
    </location>
    <ligand>
        <name>mRNA</name>
        <dbReference type="ChEBI" id="CHEBI:33699"/>
    </ligand>
    <ligandPart>
        <name>mRNA cap</name>
    </ligandPart>
</feature>
<feature type="splice variant" id="VSP_044211" description="In isoform c." evidence="5">
    <location>
        <begin position="1"/>
        <end position="102"/>
    </location>
</feature>
<feature type="splice variant" id="VSP_044210" description="In isoform b." evidence="5">
    <location>
        <begin position="1"/>
        <end position="67"/>
    </location>
</feature>
<evidence type="ECO:0000250" key="1"/>
<evidence type="ECO:0000255" key="2">
    <source>
        <dbReference type="PROSITE-ProRule" id="PRU00176"/>
    </source>
</evidence>
<evidence type="ECO:0000256" key="3">
    <source>
        <dbReference type="SAM" id="MobiDB-lite"/>
    </source>
</evidence>
<evidence type="ECO:0000269" key="4">
    <source>
    </source>
</evidence>
<evidence type="ECO:0000305" key="5"/>
<dbReference type="EMBL" id="Z78419">
    <property type="protein sequence ID" value="CCD31067.1"/>
    <property type="molecule type" value="Genomic_DNA"/>
</dbReference>
<dbReference type="EMBL" id="Z78419">
    <property type="protein sequence ID" value="CCD31068.1"/>
    <property type="molecule type" value="Genomic_DNA"/>
</dbReference>
<dbReference type="EMBL" id="Z78419">
    <property type="protein sequence ID" value="CCD31069.1"/>
    <property type="molecule type" value="Genomic_DNA"/>
</dbReference>
<dbReference type="PIR" id="T21382">
    <property type="entry name" value="T21382"/>
</dbReference>
<dbReference type="RefSeq" id="NP_001250552.1">
    <property type="nucleotide sequence ID" value="NM_001263623.1"/>
</dbReference>
<dbReference type="RefSeq" id="NP_001250553.1">
    <molecule id="Q93594-2"/>
    <property type="nucleotide sequence ID" value="NM_001263624.3"/>
</dbReference>
<dbReference type="RefSeq" id="NP_001250554.1">
    <molecule id="Q93594-3"/>
    <property type="nucleotide sequence ID" value="NM_001263625.3"/>
</dbReference>
<dbReference type="RefSeq" id="NP_001370288.1">
    <molecule id="Q93594-1"/>
    <property type="nucleotide sequence ID" value="NM_001383376.2"/>
</dbReference>
<dbReference type="SMR" id="Q93594"/>
<dbReference type="BioGRID" id="49734">
    <property type="interactions" value="5"/>
</dbReference>
<dbReference type="ComplexPortal" id="CPX-957">
    <property type="entry name" value="Nuclear cap-binding complex"/>
</dbReference>
<dbReference type="FunCoup" id="Q93594">
    <property type="interactions" value="2819"/>
</dbReference>
<dbReference type="STRING" id="6239.F26A3.2a.2"/>
<dbReference type="PaxDb" id="6239-F26A3.2a"/>
<dbReference type="PeptideAtlas" id="Q93594"/>
<dbReference type="EnsemblMetazoa" id="F26A3.2a.1">
    <molecule id="Q93594-1"/>
    <property type="protein sequence ID" value="F26A3.2a.1"/>
    <property type="gene ID" value="WBGene00009141"/>
</dbReference>
<dbReference type="EnsemblMetazoa" id="F26A3.2a.2">
    <molecule id="Q93594-1"/>
    <property type="protein sequence ID" value="F26A3.2a.2"/>
    <property type="gene ID" value="WBGene00009141"/>
</dbReference>
<dbReference type="EnsemblMetazoa" id="F26A3.2b.1">
    <molecule id="Q93594-2"/>
    <property type="protein sequence ID" value="F26A3.2b.1"/>
    <property type="gene ID" value="WBGene00009141"/>
</dbReference>
<dbReference type="EnsemblMetazoa" id="F26A3.2c.1">
    <molecule id="Q93594-3"/>
    <property type="protein sequence ID" value="F26A3.2c.1"/>
    <property type="gene ID" value="WBGene00009141"/>
</dbReference>
<dbReference type="GeneID" id="184953"/>
<dbReference type="KEGG" id="cel:CELE_F26A3.2"/>
<dbReference type="UCSC" id="F26A3.2">
    <molecule id="Q93594-1"/>
    <property type="organism name" value="c. elegans"/>
</dbReference>
<dbReference type="AGR" id="WB:WBGene00009141"/>
<dbReference type="CTD" id="184953"/>
<dbReference type="WormBase" id="F26A3.2a">
    <molecule id="Q93594-1"/>
    <property type="protein sequence ID" value="CE46329"/>
    <property type="gene ID" value="WBGene00009141"/>
    <property type="gene designation" value="ncbp-2"/>
</dbReference>
<dbReference type="WormBase" id="F26A3.2b">
    <molecule id="Q93594-2"/>
    <property type="protein sequence ID" value="CE46444"/>
    <property type="gene ID" value="WBGene00009141"/>
    <property type="gene designation" value="ncbp-2"/>
</dbReference>
<dbReference type="WormBase" id="F26A3.2c">
    <molecule id="Q93594-3"/>
    <property type="protein sequence ID" value="CE46506"/>
    <property type="gene ID" value="WBGene00009141"/>
    <property type="gene designation" value="ncbp-2"/>
</dbReference>
<dbReference type="eggNOG" id="KOG0121">
    <property type="taxonomic scope" value="Eukaryota"/>
</dbReference>
<dbReference type="GeneTree" id="ENSGT00390000003197"/>
<dbReference type="HOGENOM" id="CLU_070952_2_1_1"/>
<dbReference type="InParanoid" id="Q93594"/>
<dbReference type="OMA" id="DIRRIIM"/>
<dbReference type="OrthoDB" id="201398at2759"/>
<dbReference type="PhylomeDB" id="Q93594"/>
<dbReference type="Reactome" id="R-CEL-111367">
    <property type="pathway name" value="SLBP independent Processing of Histone Pre-mRNAs"/>
</dbReference>
<dbReference type="Reactome" id="R-CEL-113418">
    <property type="pathway name" value="Formation of the Early Elongation Complex"/>
</dbReference>
<dbReference type="Reactome" id="R-CEL-159236">
    <property type="pathway name" value="Transport of Mature mRNA derived from an Intron-Containing Transcript"/>
</dbReference>
<dbReference type="Reactome" id="R-CEL-674695">
    <property type="pathway name" value="RNA Polymerase II Pre-transcription Events"/>
</dbReference>
<dbReference type="Reactome" id="R-CEL-6803529">
    <property type="pathway name" value="FGFR2 alternative splicing"/>
</dbReference>
<dbReference type="Reactome" id="R-CEL-6807505">
    <property type="pathway name" value="RNA polymerase II transcribes snRNA genes"/>
</dbReference>
<dbReference type="Reactome" id="R-CEL-72086">
    <property type="pathway name" value="mRNA Capping"/>
</dbReference>
<dbReference type="Reactome" id="R-CEL-72163">
    <property type="pathway name" value="mRNA Splicing - Major Pathway"/>
</dbReference>
<dbReference type="Reactome" id="R-CEL-72165">
    <property type="pathway name" value="mRNA Splicing - Minor Pathway"/>
</dbReference>
<dbReference type="Reactome" id="R-CEL-72187">
    <property type="pathway name" value="mRNA 3'-end processing"/>
</dbReference>
<dbReference type="Reactome" id="R-CEL-72203">
    <property type="pathway name" value="Processing of Capped Intron-Containing Pre-mRNA"/>
</dbReference>
<dbReference type="Reactome" id="R-CEL-73856">
    <property type="pathway name" value="RNA Polymerase II Transcription Termination"/>
</dbReference>
<dbReference type="Reactome" id="R-CEL-77588">
    <property type="pathway name" value="SLBP Dependent Processing of Replication-Dependent Histone Pre-mRNAs"/>
</dbReference>
<dbReference type="Reactome" id="R-CEL-77595">
    <property type="pathway name" value="Processing of Intronless Pre-mRNAs"/>
</dbReference>
<dbReference type="Reactome" id="R-CEL-975956">
    <property type="pathway name" value="Nonsense Mediated Decay (NMD) independent of the Exon Junction Complex (EJC)"/>
</dbReference>
<dbReference type="Reactome" id="R-CEL-975957">
    <property type="pathway name" value="Nonsense Mediated Decay (NMD) enhanced by the Exon Junction Complex (EJC)"/>
</dbReference>
<dbReference type="PRO" id="PR:Q93594"/>
<dbReference type="Proteomes" id="UP000001940">
    <property type="component" value="Chromosome I"/>
</dbReference>
<dbReference type="Bgee" id="WBGene00009141">
    <property type="expression patterns" value="Expressed in embryo and 4 other cell types or tissues"/>
</dbReference>
<dbReference type="GO" id="GO:0005846">
    <property type="term" value="C:nuclear cap binding complex"/>
    <property type="evidence" value="ECO:0000318"/>
    <property type="project" value="GO_Central"/>
</dbReference>
<dbReference type="GO" id="GO:0005635">
    <property type="term" value="C:nuclear envelope"/>
    <property type="evidence" value="ECO:0000314"/>
    <property type="project" value="WormBase"/>
</dbReference>
<dbReference type="GO" id="GO:0034399">
    <property type="term" value="C:nuclear periphery"/>
    <property type="evidence" value="ECO:0000314"/>
    <property type="project" value="WormBase"/>
</dbReference>
<dbReference type="GO" id="GO:0005634">
    <property type="term" value="C:nucleus"/>
    <property type="evidence" value="ECO:0000303"/>
    <property type="project" value="ComplexPortal"/>
</dbReference>
<dbReference type="GO" id="GO:0000339">
    <property type="term" value="F:RNA cap binding"/>
    <property type="evidence" value="ECO:0000318"/>
    <property type="project" value="GO_Central"/>
</dbReference>
<dbReference type="GO" id="GO:0035195">
    <property type="term" value="P:miRNA-mediated post-transcriptional gene silencing"/>
    <property type="evidence" value="ECO:0000303"/>
    <property type="project" value="ComplexPortal"/>
</dbReference>
<dbReference type="GO" id="GO:0031124">
    <property type="term" value="P:mRNA 3'-end processing"/>
    <property type="evidence" value="ECO:0000303"/>
    <property type="project" value="ComplexPortal"/>
</dbReference>
<dbReference type="GO" id="GO:0045292">
    <property type="term" value="P:mRNA cis splicing, via spliceosome"/>
    <property type="evidence" value="ECO:0007669"/>
    <property type="project" value="InterPro"/>
</dbReference>
<dbReference type="GO" id="GO:0006406">
    <property type="term" value="P:mRNA export from nucleus"/>
    <property type="evidence" value="ECO:0000303"/>
    <property type="project" value="ComplexPortal"/>
</dbReference>
<dbReference type="GO" id="GO:0000398">
    <property type="term" value="P:mRNA splicing, via spliceosome"/>
    <property type="evidence" value="ECO:0000318"/>
    <property type="project" value="GO_Central"/>
</dbReference>
<dbReference type="GO" id="GO:0042789">
    <property type="term" value="P:mRNA transcription by RNA polymerase II"/>
    <property type="evidence" value="ECO:0000303"/>
    <property type="project" value="ComplexPortal"/>
</dbReference>
<dbReference type="GO" id="GO:0000956">
    <property type="term" value="P:nuclear-transcribed mRNA catabolic process"/>
    <property type="evidence" value="ECO:0000303"/>
    <property type="project" value="ComplexPortal"/>
</dbReference>
<dbReference type="GO" id="GO:0031053">
    <property type="term" value="P:primary miRNA processing"/>
    <property type="evidence" value="ECO:0000314"/>
    <property type="project" value="ComplexPortal"/>
</dbReference>
<dbReference type="CDD" id="cd12240">
    <property type="entry name" value="RRM_NCBP2"/>
    <property type="match status" value="1"/>
</dbReference>
<dbReference type="FunFam" id="3.30.70.330:FF:000128">
    <property type="entry name" value="Nuclear cap-binding protein subunit 2"/>
    <property type="match status" value="1"/>
</dbReference>
<dbReference type="Gene3D" id="3.30.70.330">
    <property type="match status" value="1"/>
</dbReference>
<dbReference type="InterPro" id="IPR027157">
    <property type="entry name" value="NCBP2"/>
</dbReference>
<dbReference type="InterPro" id="IPR034148">
    <property type="entry name" value="NCBP2_RRM"/>
</dbReference>
<dbReference type="InterPro" id="IPR012677">
    <property type="entry name" value="Nucleotide-bd_a/b_plait_sf"/>
</dbReference>
<dbReference type="InterPro" id="IPR035979">
    <property type="entry name" value="RBD_domain_sf"/>
</dbReference>
<dbReference type="InterPro" id="IPR000504">
    <property type="entry name" value="RRM_dom"/>
</dbReference>
<dbReference type="PANTHER" id="PTHR18847">
    <property type="entry name" value="20 KD NUCLEAR CAP BINDING PROTEIN"/>
    <property type="match status" value="1"/>
</dbReference>
<dbReference type="PANTHER" id="PTHR18847:SF0">
    <property type="entry name" value="NUCLEAR CAP-BINDING PROTEIN SUBUNIT 2"/>
    <property type="match status" value="1"/>
</dbReference>
<dbReference type="Pfam" id="PF00076">
    <property type="entry name" value="RRM_1"/>
    <property type="match status" value="1"/>
</dbReference>
<dbReference type="SMART" id="SM00360">
    <property type="entry name" value="RRM"/>
    <property type="match status" value="1"/>
</dbReference>
<dbReference type="SUPFAM" id="SSF54928">
    <property type="entry name" value="RNA-binding domain, RBD"/>
    <property type="match status" value="1"/>
</dbReference>
<dbReference type="PROSITE" id="PS50102">
    <property type="entry name" value="RRM"/>
    <property type="match status" value="1"/>
</dbReference>
<gene>
    <name type="primary">ncbp-2</name>
    <name type="synonym">cbp-20</name>
    <name type="ORF">F26A3.2</name>
</gene>
<proteinExistence type="inferred from homology"/>
<keyword id="KW-0025">Alternative splicing</keyword>
<keyword id="KW-0507">mRNA processing</keyword>
<keyword id="KW-0508">mRNA splicing</keyword>
<keyword id="KW-0539">Nucleus</keyword>
<keyword id="KW-1185">Reference proteome</keyword>
<keyword id="KW-0694">RNA-binding</keyword>
<keyword id="KW-0943">RNA-mediated gene silencing</keyword>
<protein>
    <recommendedName>
        <fullName>Nuclear cap-binding protein subunit 2</fullName>
    </recommendedName>
    <alternativeName>
        <fullName>20 kDa nuclear cap-binding protein</fullName>
    </alternativeName>
    <alternativeName>
        <fullName>NCBP 20 kDa subunit</fullName>
        <shortName>CBP20</shortName>
    </alternativeName>
</protein>